<name>DDL_AZOC5</name>
<sequence length="306" mass="32913">MAKHVAVLMGGWSPEREVSLRSGAGCAKALEEVGYRVTRVDVDRDVAEVLARLKPDVALNLLHGCPGEDGTIQGILEILRIPYSHSGVLASALAMDKARAKVVMAAAGIPVPGGHLVTRAEAAKGHVLPPPYVLKPNTGGSSVGVFIVKEDQPHPPQELFRADWTFGESLMAEPFIKGLELTCGVMGDRALDVIEVEAVHGFYDYESKYAAGGSRHILPARVLPQIYQQVRMLALEAHRALGCRGISRADFRYDDTLPDGKGLVCLEVNTQPGMTETSLVPDMAAHAGISFGELVTWMVEDATLDR</sequence>
<gene>
    <name evidence="2" type="primary">ddl</name>
    <name type="ordered locus">AZC_4561</name>
</gene>
<organism>
    <name type="scientific">Azorhizobium caulinodans (strain ATCC 43989 / DSM 5975 / JCM 20966 / LMG 6465 / NBRC 14845 / NCIMB 13405 / ORS 571)</name>
    <dbReference type="NCBI Taxonomy" id="438753"/>
    <lineage>
        <taxon>Bacteria</taxon>
        <taxon>Pseudomonadati</taxon>
        <taxon>Pseudomonadota</taxon>
        <taxon>Alphaproteobacteria</taxon>
        <taxon>Hyphomicrobiales</taxon>
        <taxon>Xanthobacteraceae</taxon>
        <taxon>Azorhizobium</taxon>
    </lineage>
</organism>
<reference key="1">
    <citation type="submission" date="2007-04" db="EMBL/GenBank/DDBJ databases">
        <title>Complete genome sequence of the nitrogen-fixing bacterium Azorhizobium caulinodans ORS571.</title>
        <authorList>
            <person name="Lee K.B."/>
            <person name="Backer P.D."/>
            <person name="Aono T."/>
            <person name="Liu C.T."/>
            <person name="Suzuki S."/>
            <person name="Suzuki T."/>
            <person name="Kaneko T."/>
            <person name="Yamada M."/>
            <person name="Tabata S."/>
            <person name="Kupfer D.M."/>
            <person name="Najar F.Z."/>
            <person name="Wiley G.B."/>
            <person name="Roe B."/>
            <person name="Binnewies T."/>
            <person name="Ussery D."/>
            <person name="Vereecke D."/>
            <person name="Gevers D."/>
            <person name="Holsters M."/>
            <person name="Oyaizu H."/>
        </authorList>
    </citation>
    <scope>NUCLEOTIDE SEQUENCE [LARGE SCALE GENOMIC DNA]</scope>
    <source>
        <strain>ATCC 43989 / DSM 5975 / JCM 20966 / LMG 6465 / NBRC 14845 / NCIMB 13405 / ORS 571</strain>
    </source>
</reference>
<comment type="function">
    <text evidence="2">Cell wall formation.</text>
</comment>
<comment type="catalytic activity">
    <reaction evidence="2">
        <text>2 D-alanine + ATP = D-alanyl-D-alanine + ADP + phosphate + H(+)</text>
        <dbReference type="Rhea" id="RHEA:11224"/>
        <dbReference type="ChEBI" id="CHEBI:15378"/>
        <dbReference type="ChEBI" id="CHEBI:30616"/>
        <dbReference type="ChEBI" id="CHEBI:43474"/>
        <dbReference type="ChEBI" id="CHEBI:57416"/>
        <dbReference type="ChEBI" id="CHEBI:57822"/>
        <dbReference type="ChEBI" id="CHEBI:456216"/>
        <dbReference type="EC" id="6.3.2.4"/>
    </reaction>
</comment>
<comment type="cofactor">
    <cofactor evidence="1">
        <name>Mg(2+)</name>
        <dbReference type="ChEBI" id="CHEBI:18420"/>
    </cofactor>
    <cofactor evidence="1">
        <name>Mn(2+)</name>
        <dbReference type="ChEBI" id="CHEBI:29035"/>
    </cofactor>
    <text evidence="1">Binds 2 magnesium or manganese ions per subunit.</text>
</comment>
<comment type="pathway">
    <text evidence="2">Cell wall biogenesis; peptidoglycan biosynthesis.</text>
</comment>
<comment type="subcellular location">
    <subcellularLocation>
        <location evidence="2">Cytoplasm</location>
    </subcellularLocation>
</comment>
<comment type="similarity">
    <text evidence="2">Belongs to the D-alanine--D-alanine ligase family.</text>
</comment>
<feature type="chain" id="PRO_0000341057" description="D-alanine--D-alanine ligase">
    <location>
        <begin position="1"/>
        <end position="306"/>
    </location>
</feature>
<feature type="domain" description="ATP-grasp" evidence="2">
    <location>
        <begin position="101"/>
        <end position="300"/>
    </location>
</feature>
<feature type="binding site" evidence="2">
    <location>
        <begin position="128"/>
        <end position="182"/>
    </location>
    <ligand>
        <name>ATP</name>
        <dbReference type="ChEBI" id="CHEBI:30616"/>
    </ligand>
</feature>
<feature type="binding site" evidence="2">
    <location>
        <position position="250"/>
    </location>
    <ligand>
        <name>Mg(2+)</name>
        <dbReference type="ChEBI" id="CHEBI:18420"/>
        <label>1</label>
    </ligand>
</feature>
<feature type="binding site" evidence="2">
    <location>
        <position position="267"/>
    </location>
    <ligand>
        <name>Mg(2+)</name>
        <dbReference type="ChEBI" id="CHEBI:18420"/>
        <label>1</label>
    </ligand>
</feature>
<feature type="binding site" evidence="2">
    <location>
        <position position="267"/>
    </location>
    <ligand>
        <name>Mg(2+)</name>
        <dbReference type="ChEBI" id="CHEBI:18420"/>
        <label>2</label>
    </ligand>
</feature>
<feature type="binding site" evidence="2">
    <location>
        <position position="269"/>
    </location>
    <ligand>
        <name>Mg(2+)</name>
        <dbReference type="ChEBI" id="CHEBI:18420"/>
        <label>2</label>
    </ligand>
</feature>
<dbReference type="EC" id="6.3.2.4" evidence="2"/>
<dbReference type="EMBL" id="AP009384">
    <property type="protein sequence ID" value="BAF90559.1"/>
    <property type="molecule type" value="Genomic_DNA"/>
</dbReference>
<dbReference type="RefSeq" id="WP_012173080.1">
    <property type="nucleotide sequence ID" value="NC_009937.1"/>
</dbReference>
<dbReference type="SMR" id="A8HZA8"/>
<dbReference type="STRING" id="438753.AZC_4561"/>
<dbReference type="KEGG" id="azc:AZC_4561"/>
<dbReference type="eggNOG" id="COG1181">
    <property type="taxonomic scope" value="Bacteria"/>
</dbReference>
<dbReference type="HOGENOM" id="CLU_039268_1_1_5"/>
<dbReference type="UniPathway" id="UPA00219"/>
<dbReference type="Proteomes" id="UP000000270">
    <property type="component" value="Chromosome"/>
</dbReference>
<dbReference type="GO" id="GO:0005737">
    <property type="term" value="C:cytoplasm"/>
    <property type="evidence" value="ECO:0007669"/>
    <property type="project" value="UniProtKB-SubCell"/>
</dbReference>
<dbReference type="GO" id="GO:0005524">
    <property type="term" value="F:ATP binding"/>
    <property type="evidence" value="ECO:0007669"/>
    <property type="project" value="UniProtKB-KW"/>
</dbReference>
<dbReference type="GO" id="GO:0008716">
    <property type="term" value="F:D-alanine-D-alanine ligase activity"/>
    <property type="evidence" value="ECO:0007669"/>
    <property type="project" value="UniProtKB-UniRule"/>
</dbReference>
<dbReference type="GO" id="GO:0046872">
    <property type="term" value="F:metal ion binding"/>
    <property type="evidence" value="ECO:0007669"/>
    <property type="project" value="UniProtKB-KW"/>
</dbReference>
<dbReference type="GO" id="GO:0071555">
    <property type="term" value="P:cell wall organization"/>
    <property type="evidence" value="ECO:0007669"/>
    <property type="project" value="UniProtKB-KW"/>
</dbReference>
<dbReference type="GO" id="GO:0009252">
    <property type="term" value="P:peptidoglycan biosynthetic process"/>
    <property type="evidence" value="ECO:0007669"/>
    <property type="project" value="UniProtKB-UniRule"/>
</dbReference>
<dbReference type="GO" id="GO:0008360">
    <property type="term" value="P:regulation of cell shape"/>
    <property type="evidence" value="ECO:0007669"/>
    <property type="project" value="UniProtKB-KW"/>
</dbReference>
<dbReference type="Gene3D" id="3.40.50.20">
    <property type="match status" value="1"/>
</dbReference>
<dbReference type="Gene3D" id="3.30.1490.20">
    <property type="entry name" value="ATP-grasp fold, A domain"/>
    <property type="match status" value="1"/>
</dbReference>
<dbReference type="Gene3D" id="3.30.470.20">
    <property type="entry name" value="ATP-grasp fold, B domain"/>
    <property type="match status" value="1"/>
</dbReference>
<dbReference type="HAMAP" id="MF_00047">
    <property type="entry name" value="Dala_Dala_lig"/>
    <property type="match status" value="1"/>
</dbReference>
<dbReference type="InterPro" id="IPR011761">
    <property type="entry name" value="ATP-grasp"/>
</dbReference>
<dbReference type="InterPro" id="IPR013815">
    <property type="entry name" value="ATP_grasp_subdomain_1"/>
</dbReference>
<dbReference type="InterPro" id="IPR000291">
    <property type="entry name" value="D-Ala_lig_Van_CS"/>
</dbReference>
<dbReference type="InterPro" id="IPR005905">
    <property type="entry name" value="D_ala_D_ala"/>
</dbReference>
<dbReference type="InterPro" id="IPR011095">
    <property type="entry name" value="Dala_Dala_lig_C"/>
</dbReference>
<dbReference type="InterPro" id="IPR011127">
    <property type="entry name" value="Dala_Dala_lig_N"/>
</dbReference>
<dbReference type="InterPro" id="IPR016185">
    <property type="entry name" value="PreATP-grasp_dom_sf"/>
</dbReference>
<dbReference type="NCBIfam" id="TIGR01205">
    <property type="entry name" value="D_ala_D_alaTIGR"/>
    <property type="match status" value="1"/>
</dbReference>
<dbReference type="NCBIfam" id="NF002378">
    <property type="entry name" value="PRK01372.1"/>
    <property type="match status" value="1"/>
</dbReference>
<dbReference type="PANTHER" id="PTHR23132">
    <property type="entry name" value="D-ALANINE--D-ALANINE LIGASE"/>
    <property type="match status" value="1"/>
</dbReference>
<dbReference type="PANTHER" id="PTHR23132:SF23">
    <property type="entry name" value="D-ALANINE--D-ALANINE LIGASE B"/>
    <property type="match status" value="1"/>
</dbReference>
<dbReference type="Pfam" id="PF07478">
    <property type="entry name" value="Dala_Dala_lig_C"/>
    <property type="match status" value="1"/>
</dbReference>
<dbReference type="Pfam" id="PF01820">
    <property type="entry name" value="Dala_Dala_lig_N"/>
    <property type="match status" value="1"/>
</dbReference>
<dbReference type="PIRSF" id="PIRSF039102">
    <property type="entry name" value="Ddl/VanB"/>
    <property type="match status" value="1"/>
</dbReference>
<dbReference type="SUPFAM" id="SSF56059">
    <property type="entry name" value="Glutathione synthetase ATP-binding domain-like"/>
    <property type="match status" value="1"/>
</dbReference>
<dbReference type="SUPFAM" id="SSF52440">
    <property type="entry name" value="PreATP-grasp domain"/>
    <property type="match status" value="1"/>
</dbReference>
<dbReference type="PROSITE" id="PS50975">
    <property type="entry name" value="ATP_GRASP"/>
    <property type="match status" value="1"/>
</dbReference>
<dbReference type="PROSITE" id="PS00843">
    <property type="entry name" value="DALA_DALA_LIGASE_1"/>
    <property type="match status" value="1"/>
</dbReference>
<dbReference type="PROSITE" id="PS00844">
    <property type="entry name" value="DALA_DALA_LIGASE_2"/>
    <property type="match status" value="1"/>
</dbReference>
<evidence type="ECO:0000250" key="1"/>
<evidence type="ECO:0000255" key="2">
    <source>
        <dbReference type="HAMAP-Rule" id="MF_00047"/>
    </source>
</evidence>
<accession>A8HZA8</accession>
<keyword id="KW-0067">ATP-binding</keyword>
<keyword id="KW-0133">Cell shape</keyword>
<keyword id="KW-0961">Cell wall biogenesis/degradation</keyword>
<keyword id="KW-0963">Cytoplasm</keyword>
<keyword id="KW-0436">Ligase</keyword>
<keyword id="KW-0460">Magnesium</keyword>
<keyword id="KW-0464">Manganese</keyword>
<keyword id="KW-0479">Metal-binding</keyword>
<keyword id="KW-0547">Nucleotide-binding</keyword>
<keyword id="KW-0573">Peptidoglycan synthesis</keyword>
<keyword id="KW-1185">Reference proteome</keyword>
<proteinExistence type="inferred from homology"/>
<protein>
    <recommendedName>
        <fullName evidence="2">D-alanine--D-alanine ligase</fullName>
        <ecNumber evidence="2">6.3.2.4</ecNumber>
    </recommendedName>
    <alternativeName>
        <fullName evidence="2">D-Ala-D-Ala ligase</fullName>
    </alternativeName>
    <alternativeName>
        <fullName evidence="2">D-alanylalanine synthetase</fullName>
    </alternativeName>
</protein>